<organism>
    <name type="scientific">Burkholderia lata (strain ATCC 17760 / DSM 23089 / LMG 22485 / NCIMB 9086 / R18194 / 383)</name>
    <dbReference type="NCBI Taxonomy" id="482957"/>
    <lineage>
        <taxon>Bacteria</taxon>
        <taxon>Pseudomonadati</taxon>
        <taxon>Pseudomonadota</taxon>
        <taxon>Betaproteobacteria</taxon>
        <taxon>Burkholderiales</taxon>
        <taxon>Burkholderiaceae</taxon>
        <taxon>Burkholderia</taxon>
        <taxon>Burkholderia cepacia complex</taxon>
    </lineage>
</organism>
<evidence type="ECO:0000255" key="1">
    <source>
        <dbReference type="HAMAP-Rule" id="MF_01014"/>
    </source>
</evidence>
<name>HIS4_BURL3</name>
<accession>Q39K86</accession>
<proteinExistence type="inferred from homology"/>
<feature type="chain" id="PRO_0000229047" description="1-(5-phosphoribosyl)-5-[(5-phosphoribosylamino)methylideneamino] imidazole-4-carboxamide isomerase">
    <location>
        <begin position="1"/>
        <end position="251"/>
    </location>
</feature>
<feature type="active site" description="Proton acceptor" evidence="1">
    <location>
        <position position="8"/>
    </location>
</feature>
<feature type="active site" description="Proton donor" evidence="1">
    <location>
        <position position="131"/>
    </location>
</feature>
<reference key="1">
    <citation type="submission" date="2005-10" db="EMBL/GenBank/DDBJ databases">
        <title>Complete sequence of chromosome 1 of Burkholderia sp. 383.</title>
        <authorList>
            <consortium name="US DOE Joint Genome Institute"/>
            <person name="Copeland A."/>
            <person name="Lucas S."/>
            <person name="Lapidus A."/>
            <person name="Barry K."/>
            <person name="Detter J.C."/>
            <person name="Glavina T."/>
            <person name="Hammon N."/>
            <person name="Israni S."/>
            <person name="Pitluck S."/>
            <person name="Chain P."/>
            <person name="Malfatti S."/>
            <person name="Shin M."/>
            <person name="Vergez L."/>
            <person name="Schmutz J."/>
            <person name="Larimer F."/>
            <person name="Land M."/>
            <person name="Kyrpides N."/>
            <person name="Lykidis A."/>
            <person name="Richardson P."/>
        </authorList>
    </citation>
    <scope>NUCLEOTIDE SEQUENCE [LARGE SCALE GENOMIC DNA]</scope>
    <source>
        <strain>ATCC 17760 / DSM 23089 / LMG 22485 / NCIMB 9086 / R18194 / 383</strain>
    </source>
</reference>
<keyword id="KW-0028">Amino-acid biosynthesis</keyword>
<keyword id="KW-0963">Cytoplasm</keyword>
<keyword id="KW-0368">Histidine biosynthesis</keyword>
<keyword id="KW-0413">Isomerase</keyword>
<comment type="catalytic activity">
    <reaction evidence="1">
        <text>1-(5-phospho-beta-D-ribosyl)-5-[(5-phospho-beta-D-ribosylamino)methylideneamino]imidazole-4-carboxamide = 5-[(5-phospho-1-deoxy-D-ribulos-1-ylimino)methylamino]-1-(5-phospho-beta-D-ribosyl)imidazole-4-carboxamide</text>
        <dbReference type="Rhea" id="RHEA:15469"/>
        <dbReference type="ChEBI" id="CHEBI:58435"/>
        <dbReference type="ChEBI" id="CHEBI:58525"/>
        <dbReference type="EC" id="5.3.1.16"/>
    </reaction>
</comment>
<comment type="pathway">
    <text evidence="1">Amino-acid biosynthesis; L-histidine biosynthesis; L-histidine from 5-phospho-alpha-D-ribose 1-diphosphate: step 4/9.</text>
</comment>
<comment type="subcellular location">
    <subcellularLocation>
        <location evidence="1">Cytoplasm</location>
    </subcellularLocation>
</comment>
<comment type="similarity">
    <text evidence="1">Belongs to the HisA/HisF family.</text>
</comment>
<sequence>MLLIPAIDLKDGQCVRLKQGDMDQATIFSEDPAAMARKWVDLGARRLHLVDLNGAFAGKPKNLEAIEAILDEVGDEIPVQLGGGIRSLETIEKYLDAGLSYVIIGTAAVKDPGFLQDACTAFAGSIIVGLDAKDGKVATDGWSKLTGHEVIDLAQKFEDYGVESIVYTDIGRDGMLQGINIEATVKLAQAVGIPVIASGGLSNLVDIENLCEVEEQGVEGVICGRAIYSGDLDFAAAQKRADELNGELDNA</sequence>
<protein>
    <recommendedName>
        <fullName evidence="1">1-(5-phosphoribosyl)-5-[(5-phosphoribosylamino)methylideneamino] imidazole-4-carboxamide isomerase</fullName>
        <ecNumber evidence="1">5.3.1.16</ecNumber>
    </recommendedName>
    <alternativeName>
        <fullName evidence="1">Phosphoribosylformimino-5-aminoimidazole carboxamide ribotide isomerase</fullName>
    </alternativeName>
</protein>
<gene>
    <name evidence="1" type="primary">hisA</name>
    <name type="ordered locus">Bcep18194_A3528</name>
</gene>
<dbReference type="EC" id="5.3.1.16" evidence="1"/>
<dbReference type="EMBL" id="CP000151">
    <property type="protein sequence ID" value="ABB07130.1"/>
    <property type="molecule type" value="Genomic_DNA"/>
</dbReference>
<dbReference type="RefSeq" id="WP_011350731.1">
    <property type="nucleotide sequence ID" value="NC_007510.1"/>
</dbReference>
<dbReference type="SMR" id="Q39K86"/>
<dbReference type="GeneID" id="45093443"/>
<dbReference type="KEGG" id="bur:Bcep18194_A3528"/>
<dbReference type="PATRIC" id="fig|482957.22.peg.373"/>
<dbReference type="HOGENOM" id="CLU_048577_1_1_4"/>
<dbReference type="UniPathway" id="UPA00031">
    <property type="reaction ID" value="UER00009"/>
</dbReference>
<dbReference type="Proteomes" id="UP000002705">
    <property type="component" value="Chromosome 1"/>
</dbReference>
<dbReference type="GO" id="GO:0005737">
    <property type="term" value="C:cytoplasm"/>
    <property type="evidence" value="ECO:0007669"/>
    <property type="project" value="UniProtKB-SubCell"/>
</dbReference>
<dbReference type="GO" id="GO:0003949">
    <property type="term" value="F:1-(5-phosphoribosyl)-5-[(5-phosphoribosylamino)methylideneamino]imidazole-4-carboxamide isomerase activity"/>
    <property type="evidence" value="ECO:0007669"/>
    <property type="project" value="UniProtKB-UniRule"/>
</dbReference>
<dbReference type="GO" id="GO:0000105">
    <property type="term" value="P:L-histidine biosynthetic process"/>
    <property type="evidence" value="ECO:0007669"/>
    <property type="project" value="UniProtKB-UniRule"/>
</dbReference>
<dbReference type="GO" id="GO:0000162">
    <property type="term" value="P:L-tryptophan biosynthetic process"/>
    <property type="evidence" value="ECO:0007669"/>
    <property type="project" value="TreeGrafter"/>
</dbReference>
<dbReference type="CDD" id="cd04732">
    <property type="entry name" value="HisA"/>
    <property type="match status" value="1"/>
</dbReference>
<dbReference type="FunFam" id="3.20.20.70:FF:000009">
    <property type="entry name" value="1-(5-phosphoribosyl)-5-[(5-phosphoribosylamino)methylideneamino] imidazole-4-carboxamide isomerase"/>
    <property type="match status" value="1"/>
</dbReference>
<dbReference type="Gene3D" id="3.20.20.70">
    <property type="entry name" value="Aldolase class I"/>
    <property type="match status" value="1"/>
</dbReference>
<dbReference type="HAMAP" id="MF_01014">
    <property type="entry name" value="HisA"/>
    <property type="match status" value="1"/>
</dbReference>
<dbReference type="InterPro" id="IPR013785">
    <property type="entry name" value="Aldolase_TIM"/>
</dbReference>
<dbReference type="InterPro" id="IPR006062">
    <property type="entry name" value="His_biosynth"/>
</dbReference>
<dbReference type="InterPro" id="IPR006063">
    <property type="entry name" value="HisA_bact_arch"/>
</dbReference>
<dbReference type="InterPro" id="IPR044524">
    <property type="entry name" value="Isoase_HisA-like"/>
</dbReference>
<dbReference type="InterPro" id="IPR023016">
    <property type="entry name" value="Isoase_HisA-like_bact"/>
</dbReference>
<dbReference type="InterPro" id="IPR011060">
    <property type="entry name" value="RibuloseP-bd_barrel"/>
</dbReference>
<dbReference type="NCBIfam" id="TIGR00007">
    <property type="entry name" value="1-(5-phosphoribosyl)-5-[(5-phosphoribosylamino)methylideneamino]imidazole-4-carboxamide isomerase"/>
    <property type="match status" value="1"/>
</dbReference>
<dbReference type="NCBIfam" id="NF010112">
    <property type="entry name" value="PRK13585.1"/>
    <property type="match status" value="1"/>
</dbReference>
<dbReference type="PANTHER" id="PTHR43090">
    <property type="entry name" value="1-(5-PHOSPHORIBOSYL)-5-[(5-PHOSPHORIBOSYLAMINO)METHYLIDENEAMINO] IMIDAZOLE-4-CARBOXAMIDE ISOMERASE"/>
    <property type="match status" value="1"/>
</dbReference>
<dbReference type="PANTHER" id="PTHR43090:SF2">
    <property type="entry name" value="1-(5-PHOSPHORIBOSYL)-5-[(5-PHOSPHORIBOSYLAMINO)METHYLIDENEAMINO] IMIDAZOLE-4-CARBOXAMIDE ISOMERASE"/>
    <property type="match status" value="1"/>
</dbReference>
<dbReference type="Pfam" id="PF00977">
    <property type="entry name" value="His_biosynth"/>
    <property type="match status" value="1"/>
</dbReference>
<dbReference type="SUPFAM" id="SSF51366">
    <property type="entry name" value="Ribulose-phoshate binding barrel"/>
    <property type="match status" value="1"/>
</dbReference>